<accession>P40536</accession>
<feature type="chain" id="PRO_0000202995" description="Putative uncharacterized protein YIL032C">
    <location>
        <begin position="1"/>
        <end position="118"/>
    </location>
</feature>
<feature type="region of interest" description="Disordered" evidence="1">
    <location>
        <begin position="49"/>
        <end position="80"/>
    </location>
</feature>
<feature type="compositionally biased region" description="Basic residues" evidence="1">
    <location>
        <begin position="61"/>
        <end position="70"/>
    </location>
</feature>
<organism>
    <name type="scientific">Saccharomyces cerevisiae (strain ATCC 204508 / S288c)</name>
    <name type="common">Baker's yeast</name>
    <dbReference type="NCBI Taxonomy" id="559292"/>
    <lineage>
        <taxon>Eukaryota</taxon>
        <taxon>Fungi</taxon>
        <taxon>Dikarya</taxon>
        <taxon>Ascomycota</taxon>
        <taxon>Saccharomycotina</taxon>
        <taxon>Saccharomycetes</taxon>
        <taxon>Saccharomycetales</taxon>
        <taxon>Saccharomycetaceae</taxon>
        <taxon>Saccharomyces</taxon>
    </lineage>
</organism>
<protein>
    <recommendedName>
        <fullName>Putative uncharacterized protein YIL032C</fullName>
    </recommendedName>
</protein>
<sequence>MKQAIREKVKKKRRREKNTSGKYKGLYILFRLAADDFTYSAFFYLSKRSKEEHTTSAANLHPRKKKRMPPRRAEKNKAPNHHPSFFLRVIPATFVLPDNILIILCSDSDLFFVAEAIS</sequence>
<reference key="1">
    <citation type="journal article" date="1997" name="Nature">
        <title>The nucleotide sequence of Saccharomyces cerevisiae chromosome IX.</title>
        <authorList>
            <person name="Churcher C.M."/>
            <person name="Bowman S."/>
            <person name="Badcock K."/>
            <person name="Bankier A.T."/>
            <person name="Brown D."/>
            <person name="Chillingworth T."/>
            <person name="Connor R."/>
            <person name="Devlin K."/>
            <person name="Gentles S."/>
            <person name="Hamlin N."/>
            <person name="Harris D.E."/>
            <person name="Horsnell T."/>
            <person name="Hunt S."/>
            <person name="Jagels K."/>
            <person name="Jones M."/>
            <person name="Lye G."/>
            <person name="Moule S."/>
            <person name="Odell C."/>
            <person name="Pearson D."/>
            <person name="Rajandream M.A."/>
            <person name="Rice P."/>
            <person name="Rowley N."/>
            <person name="Skelton J."/>
            <person name="Smith V."/>
            <person name="Walsh S.V."/>
            <person name="Whitehead S."/>
            <person name="Barrell B.G."/>
        </authorList>
    </citation>
    <scope>NUCLEOTIDE SEQUENCE [LARGE SCALE GENOMIC DNA]</scope>
    <source>
        <strain>ATCC 204508 / S288c</strain>
    </source>
</reference>
<reference key="2">
    <citation type="journal article" date="2014" name="G3 (Bethesda)">
        <title>The reference genome sequence of Saccharomyces cerevisiae: Then and now.</title>
        <authorList>
            <person name="Engel S.R."/>
            <person name="Dietrich F.S."/>
            <person name="Fisk D.G."/>
            <person name="Binkley G."/>
            <person name="Balakrishnan R."/>
            <person name="Costanzo M.C."/>
            <person name="Dwight S.S."/>
            <person name="Hitz B.C."/>
            <person name="Karra K."/>
            <person name="Nash R.S."/>
            <person name="Weng S."/>
            <person name="Wong E.D."/>
            <person name="Lloyd P."/>
            <person name="Skrzypek M.S."/>
            <person name="Miyasato S.R."/>
            <person name="Simison M."/>
            <person name="Cherry J.M."/>
        </authorList>
    </citation>
    <scope>GENOME REANNOTATION</scope>
    <source>
        <strain>ATCC 204508 / S288c</strain>
    </source>
</reference>
<proteinExistence type="uncertain"/>
<evidence type="ECO:0000256" key="1">
    <source>
        <dbReference type="SAM" id="MobiDB-lite"/>
    </source>
</evidence>
<evidence type="ECO:0000305" key="2">
    <source>
    </source>
</evidence>
<comment type="caution">
    <text evidence="2">Product of a dubious gene prediction unlikely to encode a functional protein. Because of that it is not part of the S.cerevisiae S288c complete/reference proteome set.</text>
</comment>
<gene>
    <name type="ordered locus">YIL032C</name>
</gene>
<dbReference type="EMBL" id="Z46861">
    <property type="protein sequence ID" value="CAA86919.1"/>
    <property type="molecule type" value="Genomic_DNA"/>
</dbReference>
<dbReference type="PIR" id="S49946">
    <property type="entry name" value="S49946"/>
</dbReference>
<dbReference type="DIP" id="DIP-4715N"/>
<dbReference type="STRING" id="4932.YIL032C"/>
<dbReference type="PaxDb" id="4932-YIL032C"/>
<dbReference type="EnsemblFungi" id="YIL032C_mRNA">
    <property type="protein sequence ID" value="YIL032C"/>
    <property type="gene ID" value="YIL032C"/>
</dbReference>
<dbReference type="AGR" id="SGD:S000001294"/>
<dbReference type="SGD" id="S000001294">
    <property type="gene designation" value="YIL032C"/>
</dbReference>
<dbReference type="HOGENOM" id="CLU_2074986_0_0_1"/>
<name>YID2_YEAST</name>